<name>RLMG_SALPA</name>
<organism>
    <name type="scientific">Salmonella paratyphi A (strain ATCC 9150 / SARB42)</name>
    <dbReference type="NCBI Taxonomy" id="295319"/>
    <lineage>
        <taxon>Bacteria</taxon>
        <taxon>Pseudomonadati</taxon>
        <taxon>Pseudomonadota</taxon>
        <taxon>Gammaproteobacteria</taxon>
        <taxon>Enterobacterales</taxon>
        <taxon>Enterobacteriaceae</taxon>
        <taxon>Salmonella</taxon>
    </lineage>
</organism>
<protein>
    <recommendedName>
        <fullName evidence="1">Ribosomal RNA large subunit methyltransferase G</fullName>
        <ecNumber evidence="1">2.1.1.174</ecNumber>
    </recommendedName>
    <alternativeName>
        <fullName evidence="1">23S rRNA m2G1835 methyltransferase</fullName>
    </alternativeName>
    <alternativeName>
        <fullName evidence="1">rRNA (guanine-N(2)-)-methyltransferase RlmG</fullName>
    </alternativeName>
</protein>
<gene>
    <name evidence="1" type="primary">rlmG</name>
    <name type="ordered locus">SPA3088</name>
</gene>
<evidence type="ECO:0000255" key="1">
    <source>
        <dbReference type="HAMAP-Rule" id="MF_01859"/>
    </source>
</evidence>
<comment type="function">
    <text evidence="1">Specifically methylates the guanine in position 1835 (m2G1835) of 23S rRNA.</text>
</comment>
<comment type="catalytic activity">
    <reaction evidence="1">
        <text>guanosine(1835) in 23S rRNA + S-adenosyl-L-methionine = N(2)-methylguanosine(1835) in 23S rRNA + S-adenosyl-L-homocysteine + H(+)</text>
        <dbReference type="Rhea" id="RHEA:42744"/>
        <dbReference type="Rhea" id="RHEA-COMP:10217"/>
        <dbReference type="Rhea" id="RHEA-COMP:10218"/>
        <dbReference type="ChEBI" id="CHEBI:15378"/>
        <dbReference type="ChEBI" id="CHEBI:57856"/>
        <dbReference type="ChEBI" id="CHEBI:59789"/>
        <dbReference type="ChEBI" id="CHEBI:74269"/>
        <dbReference type="ChEBI" id="CHEBI:74481"/>
        <dbReference type="EC" id="2.1.1.174"/>
    </reaction>
</comment>
<comment type="subcellular location">
    <subcellularLocation>
        <location evidence="1">Cytoplasm</location>
    </subcellularLocation>
</comment>
<comment type="similarity">
    <text evidence="1">Belongs to the methyltransferase superfamily. RlmG family.</text>
</comment>
<feature type="chain" id="PRO_0000366497" description="Ribosomal RNA large subunit methyltransferase G">
    <location>
        <begin position="1"/>
        <end position="378"/>
    </location>
</feature>
<keyword id="KW-0963">Cytoplasm</keyword>
<keyword id="KW-0489">Methyltransferase</keyword>
<keyword id="KW-0698">rRNA processing</keyword>
<keyword id="KW-0949">S-adenosyl-L-methionine</keyword>
<keyword id="KW-0808">Transferase</keyword>
<dbReference type="EC" id="2.1.1.174" evidence="1"/>
<dbReference type="EMBL" id="CP000026">
    <property type="protein sequence ID" value="AAV78922.1"/>
    <property type="molecule type" value="Genomic_DNA"/>
</dbReference>
<dbReference type="RefSeq" id="WP_000019989.1">
    <property type="nucleotide sequence ID" value="NC_006511.1"/>
</dbReference>
<dbReference type="SMR" id="Q5PC93"/>
<dbReference type="KEGG" id="spt:SPA3088"/>
<dbReference type="HOGENOM" id="CLU_040288_4_0_6"/>
<dbReference type="Proteomes" id="UP000008185">
    <property type="component" value="Chromosome"/>
</dbReference>
<dbReference type="GO" id="GO:0005737">
    <property type="term" value="C:cytoplasm"/>
    <property type="evidence" value="ECO:0007669"/>
    <property type="project" value="UniProtKB-SubCell"/>
</dbReference>
<dbReference type="GO" id="GO:0052916">
    <property type="term" value="F:23S rRNA (guanine(1835)-N(2))-methyltransferase activity"/>
    <property type="evidence" value="ECO:0007669"/>
    <property type="project" value="UniProtKB-EC"/>
</dbReference>
<dbReference type="GO" id="GO:0003676">
    <property type="term" value="F:nucleic acid binding"/>
    <property type="evidence" value="ECO:0007669"/>
    <property type="project" value="InterPro"/>
</dbReference>
<dbReference type="CDD" id="cd02440">
    <property type="entry name" value="AdoMet_MTases"/>
    <property type="match status" value="1"/>
</dbReference>
<dbReference type="FunFam" id="3.40.50.150:FF:000046">
    <property type="entry name" value="Ribosomal RNA large subunit methyltransferase G"/>
    <property type="match status" value="1"/>
</dbReference>
<dbReference type="FunFam" id="3.40.50.150:FF:000047">
    <property type="entry name" value="Ribosomal RNA large subunit methyltransferase G"/>
    <property type="match status" value="1"/>
</dbReference>
<dbReference type="Gene3D" id="3.40.50.150">
    <property type="entry name" value="Vaccinia Virus protein VP39"/>
    <property type="match status" value="2"/>
</dbReference>
<dbReference type="HAMAP" id="MF_01859">
    <property type="entry name" value="23SrRNA_methyltr_G"/>
    <property type="match status" value="1"/>
</dbReference>
<dbReference type="InterPro" id="IPR002052">
    <property type="entry name" value="DNA_methylase_N6_adenine_CS"/>
</dbReference>
<dbReference type="InterPro" id="IPR017237">
    <property type="entry name" value="rRNA_m2G-MeTrfase_RlmG"/>
</dbReference>
<dbReference type="InterPro" id="IPR046977">
    <property type="entry name" value="RsmC/RlmG"/>
</dbReference>
<dbReference type="InterPro" id="IPR029063">
    <property type="entry name" value="SAM-dependent_MTases_sf"/>
</dbReference>
<dbReference type="InterPro" id="IPR007848">
    <property type="entry name" value="Small_mtfrase_dom"/>
</dbReference>
<dbReference type="NCBIfam" id="NF011577">
    <property type="entry name" value="PRK15001.1"/>
    <property type="match status" value="1"/>
</dbReference>
<dbReference type="PANTHER" id="PTHR47816:SF5">
    <property type="entry name" value="RIBOSOMAL RNA LARGE SUBUNIT METHYLTRANSFERASE G"/>
    <property type="match status" value="1"/>
</dbReference>
<dbReference type="PANTHER" id="PTHR47816">
    <property type="entry name" value="RIBOSOMAL RNA SMALL SUBUNIT METHYLTRANSFERASE C"/>
    <property type="match status" value="1"/>
</dbReference>
<dbReference type="Pfam" id="PF05175">
    <property type="entry name" value="MTS"/>
    <property type="match status" value="1"/>
</dbReference>
<dbReference type="PIRSF" id="PIRSF037565">
    <property type="entry name" value="RRNA_m2G_Mtase_RsmD_prd"/>
    <property type="match status" value="1"/>
</dbReference>
<dbReference type="SUPFAM" id="SSF53335">
    <property type="entry name" value="S-adenosyl-L-methionine-dependent methyltransferases"/>
    <property type="match status" value="1"/>
</dbReference>
<accession>Q5PC93</accession>
<sequence>MSHVDDGFRSLTLKRFPQTDDVNPLLAWEAADEYLLQQLDETEIRGPVLILNDTFGALSCALAEHSPYSIGDSYLSELGTRENLRHNGIAESSVTFLDSTADYPQAPGVVLIKVPKTLALLEQQLRALRKVVTAQTRIIAGAKARDIHTSTLELFEKVLGPTTTTLAWKKARLINCTFSHPQLADAPQTLSWKLEDTGWTIHNHANVFSRTGLDIGARFFMQHLPENLDGEIVDLGCGNGVIGLSLLAKNPQANVVFVDESPMAVDSSRLNVETNLPEAFERCEFMINNALSGVEPFRFNAVFCNPPFHQKHALTDNIAWEMFHHARRCLKINGELYIVANRHLDYFHKLKKIFGNCATIATNNKFVILKAVKQGRRR</sequence>
<reference key="1">
    <citation type="journal article" date="2004" name="Nat. Genet.">
        <title>Comparison of genome degradation in Paratyphi A and Typhi, human-restricted serovars of Salmonella enterica that cause typhoid.</title>
        <authorList>
            <person name="McClelland M."/>
            <person name="Sanderson K.E."/>
            <person name="Clifton S.W."/>
            <person name="Latreille P."/>
            <person name="Porwollik S."/>
            <person name="Sabo A."/>
            <person name="Meyer R."/>
            <person name="Bieri T."/>
            <person name="Ozersky P."/>
            <person name="McLellan M."/>
            <person name="Harkins C.R."/>
            <person name="Wang C."/>
            <person name="Nguyen C."/>
            <person name="Berghoff A."/>
            <person name="Elliott G."/>
            <person name="Kohlberg S."/>
            <person name="Strong C."/>
            <person name="Du F."/>
            <person name="Carter J."/>
            <person name="Kremizki C."/>
            <person name="Layman D."/>
            <person name="Leonard S."/>
            <person name="Sun H."/>
            <person name="Fulton L."/>
            <person name="Nash W."/>
            <person name="Miner T."/>
            <person name="Minx P."/>
            <person name="Delehaunty K."/>
            <person name="Fronick C."/>
            <person name="Magrini V."/>
            <person name="Nhan M."/>
            <person name="Warren W."/>
            <person name="Florea L."/>
            <person name="Spieth J."/>
            <person name="Wilson R.K."/>
        </authorList>
    </citation>
    <scope>NUCLEOTIDE SEQUENCE [LARGE SCALE GENOMIC DNA]</scope>
    <source>
        <strain>ATCC 9150 / SARB42</strain>
    </source>
</reference>
<proteinExistence type="inferred from homology"/>